<name>YNS9_SCHPO</name>
<sequence>MVSIEAMKDSNWDLQIQVFRRRLNPEVIEARNEIFLSLPSDHGLITLVINKDKPFQISVLLEKNQEFMQTAMNKYVETAFQNQKTTLTSLFNYLLQNWKSFETCNTKERELMVQQVDSKKPETPTDLEPLANKLEGPLSERVHLNTTLDYEVLRGQNHCQKQNTTQTKTTISGSEQLFNDEKPKKIIYSKGGNDGKEDDLQNVNEPQDAYSNDHDIQSKDTELLGNEYCLEWKNPHLTNVGTLKAPILRLVIKCVRCHYGSEISIATKFSLVCNKCSNTLRLVWVPGVIHPNNARLGILHTLGCVPVDVMPIDCQVSCMECVDEQITSFKGISSMQPMLQFCKVCKNRILVEHQDTEFHLLKQRQSSMGGKVSAKKKQKQNLNITKGLPLPNNGACEHYKKSFRWFRFSCCDRVYPCDECHDADQNHTFEHANRIICGYCAMESFYKKDATCPHCGNMTVKKQTSAYWEGGKGMRDRVRMSRKDPRKYKRKHHGN</sequence>
<feature type="chain" id="PRO_0000310739" description="Uncharacterized protein C18H10.09">
    <location>
        <begin position="1"/>
        <end position="495"/>
    </location>
</feature>
<feature type="zinc finger region" description="CHY-type" evidence="1">
    <location>
        <begin position="389"/>
        <end position="457"/>
    </location>
</feature>
<feature type="region of interest" description="Disordered" evidence="2">
    <location>
        <begin position="473"/>
        <end position="495"/>
    </location>
</feature>
<feature type="compositionally biased region" description="Basic and acidic residues" evidence="2">
    <location>
        <begin position="473"/>
        <end position="483"/>
    </location>
</feature>
<feature type="compositionally biased region" description="Basic residues" evidence="2">
    <location>
        <begin position="484"/>
        <end position="495"/>
    </location>
</feature>
<feature type="binding site" evidence="1">
    <location>
        <position position="396"/>
    </location>
    <ligand>
        <name>Zn(2+)</name>
        <dbReference type="ChEBI" id="CHEBI:29105"/>
        <label>1</label>
    </ligand>
</feature>
<feature type="binding site" evidence="1">
    <location>
        <position position="398"/>
    </location>
    <ligand>
        <name>Zn(2+)</name>
        <dbReference type="ChEBI" id="CHEBI:29105"/>
        <label>1</label>
    </ligand>
</feature>
<feature type="binding site" evidence="1">
    <location>
        <position position="410"/>
    </location>
    <ligand>
        <name>Zn(2+)</name>
        <dbReference type="ChEBI" id="CHEBI:29105"/>
        <label>2</label>
    </ligand>
</feature>
<feature type="binding site" evidence="1">
    <location>
        <position position="411"/>
    </location>
    <ligand>
        <name>Zn(2+)</name>
        <dbReference type="ChEBI" id="CHEBI:29105"/>
        <label>2</label>
    </ligand>
</feature>
<feature type="binding site" evidence="1">
    <location>
        <position position="417"/>
    </location>
    <ligand>
        <name>Zn(2+)</name>
        <dbReference type="ChEBI" id="CHEBI:29105"/>
        <label>1</label>
    </ligand>
</feature>
<feature type="binding site" evidence="1">
    <location>
        <position position="420"/>
    </location>
    <ligand>
        <name>Zn(2+)</name>
        <dbReference type="ChEBI" id="CHEBI:29105"/>
        <label>1</label>
    </ligand>
</feature>
<feature type="binding site" evidence="1">
    <location>
        <position position="421"/>
    </location>
    <ligand>
        <name>Zn(2+)</name>
        <dbReference type="ChEBI" id="CHEBI:29105"/>
        <label>2</label>
    </ligand>
</feature>
<feature type="binding site" evidence="1">
    <location>
        <position position="427"/>
    </location>
    <ligand>
        <name>Zn(2+)</name>
        <dbReference type="ChEBI" id="CHEBI:29105"/>
        <label>2</label>
    </ligand>
</feature>
<feature type="binding site" evidence="1">
    <location>
        <position position="437"/>
    </location>
    <ligand>
        <name>Zn(2+)</name>
        <dbReference type="ChEBI" id="CHEBI:29105"/>
        <label>3</label>
    </ligand>
</feature>
<feature type="binding site" evidence="1">
    <location>
        <position position="440"/>
    </location>
    <ligand>
        <name>Zn(2+)</name>
        <dbReference type="ChEBI" id="CHEBI:29105"/>
        <label>3</label>
    </ligand>
</feature>
<feature type="binding site" evidence="1">
    <location>
        <position position="452"/>
    </location>
    <ligand>
        <name>Zn(2+)</name>
        <dbReference type="ChEBI" id="CHEBI:29105"/>
        <label>3</label>
    </ligand>
</feature>
<feature type="binding site" evidence="1">
    <location>
        <position position="455"/>
    </location>
    <ligand>
        <name>Zn(2+)</name>
        <dbReference type="ChEBI" id="CHEBI:29105"/>
        <label>3</label>
    </ligand>
</feature>
<comment type="subcellular location">
    <subcellularLocation>
        <location evidence="3">Cytoplasm</location>
    </subcellularLocation>
</comment>
<reference key="1">
    <citation type="journal article" date="2002" name="Nature">
        <title>The genome sequence of Schizosaccharomyces pombe.</title>
        <authorList>
            <person name="Wood V."/>
            <person name="Gwilliam R."/>
            <person name="Rajandream M.A."/>
            <person name="Lyne M.H."/>
            <person name="Lyne R."/>
            <person name="Stewart A."/>
            <person name="Sgouros J.G."/>
            <person name="Peat N."/>
            <person name="Hayles J."/>
            <person name="Baker S.G."/>
            <person name="Basham D."/>
            <person name="Bowman S."/>
            <person name="Brooks K."/>
            <person name="Brown D."/>
            <person name="Brown S."/>
            <person name="Chillingworth T."/>
            <person name="Churcher C.M."/>
            <person name="Collins M."/>
            <person name="Connor R."/>
            <person name="Cronin A."/>
            <person name="Davis P."/>
            <person name="Feltwell T."/>
            <person name="Fraser A."/>
            <person name="Gentles S."/>
            <person name="Goble A."/>
            <person name="Hamlin N."/>
            <person name="Harris D.E."/>
            <person name="Hidalgo J."/>
            <person name="Hodgson G."/>
            <person name="Holroyd S."/>
            <person name="Hornsby T."/>
            <person name="Howarth S."/>
            <person name="Huckle E.J."/>
            <person name="Hunt S."/>
            <person name="Jagels K."/>
            <person name="James K.D."/>
            <person name="Jones L."/>
            <person name="Jones M."/>
            <person name="Leather S."/>
            <person name="McDonald S."/>
            <person name="McLean J."/>
            <person name="Mooney P."/>
            <person name="Moule S."/>
            <person name="Mungall K.L."/>
            <person name="Murphy L.D."/>
            <person name="Niblett D."/>
            <person name="Odell C."/>
            <person name="Oliver K."/>
            <person name="O'Neil S."/>
            <person name="Pearson D."/>
            <person name="Quail M.A."/>
            <person name="Rabbinowitsch E."/>
            <person name="Rutherford K.M."/>
            <person name="Rutter S."/>
            <person name="Saunders D."/>
            <person name="Seeger K."/>
            <person name="Sharp S."/>
            <person name="Skelton J."/>
            <person name="Simmonds M.N."/>
            <person name="Squares R."/>
            <person name="Squares S."/>
            <person name="Stevens K."/>
            <person name="Taylor K."/>
            <person name="Taylor R.G."/>
            <person name="Tivey A."/>
            <person name="Walsh S.V."/>
            <person name="Warren T."/>
            <person name="Whitehead S."/>
            <person name="Woodward J.R."/>
            <person name="Volckaert G."/>
            <person name="Aert R."/>
            <person name="Robben J."/>
            <person name="Grymonprez B."/>
            <person name="Weltjens I."/>
            <person name="Vanstreels E."/>
            <person name="Rieger M."/>
            <person name="Schaefer M."/>
            <person name="Mueller-Auer S."/>
            <person name="Gabel C."/>
            <person name="Fuchs M."/>
            <person name="Duesterhoeft A."/>
            <person name="Fritzc C."/>
            <person name="Holzer E."/>
            <person name="Moestl D."/>
            <person name="Hilbert H."/>
            <person name="Borzym K."/>
            <person name="Langer I."/>
            <person name="Beck A."/>
            <person name="Lehrach H."/>
            <person name="Reinhardt R."/>
            <person name="Pohl T.M."/>
            <person name="Eger P."/>
            <person name="Zimmermann W."/>
            <person name="Wedler H."/>
            <person name="Wambutt R."/>
            <person name="Purnelle B."/>
            <person name="Goffeau A."/>
            <person name="Cadieu E."/>
            <person name="Dreano S."/>
            <person name="Gloux S."/>
            <person name="Lelaure V."/>
            <person name="Mottier S."/>
            <person name="Galibert F."/>
            <person name="Aves S.J."/>
            <person name="Xiang Z."/>
            <person name="Hunt C."/>
            <person name="Moore K."/>
            <person name="Hurst S.M."/>
            <person name="Lucas M."/>
            <person name="Rochet M."/>
            <person name="Gaillardin C."/>
            <person name="Tallada V.A."/>
            <person name="Garzon A."/>
            <person name="Thode G."/>
            <person name="Daga R.R."/>
            <person name="Cruzado L."/>
            <person name="Jimenez J."/>
            <person name="Sanchez M."/>
            <person name="del Rey F."/>
            <person name="Benito J."/>
            <person name="Dominguez A."/>
            <person name="Revuelta J.L."/>
            <person name="Moreno S."/>
            <person name="Armstrong J."/>
            <person name="Forsburg S.L."/>
            <person name="Cerutti L."/>
            <person name="Lowe T."/>
            <person name="McCombie W.R."/>
            <person name="Paulsen I."/>
            <person name="Potashkin J."/>
            <person name="Shpakovski G.V."/>
            <person name="Ussery D."/>
            <person name="Barrell B.G."/>
            <person name="Nurse P."/>
        </authorList>
    </citation>
    <scope>NUCLEOTIDE SEQUENCE [LARGE SCALE GENOMIC DNA]</scope>
    <source>
        <strain>972 / ATCC 24843</strain>
    </source>
</reference>
<reference key="2">
    <citation type="journal article" date="2011" name="Science">
        <title>Comparative functional genomics of the fission yeasts.</title>
        <authorList>
            <person name="Rhind N."/>
            <person name="Chen Z."/>
            <person name="Yassour M."/>
            <person name="Thompson D.A."/>
            <person name="Haas B.J."/>
            <person name="Habib N."/>
            <person name="Wapinski I."/>
            <person name="Roy S."/>
            <person name="Lin M.F."/>
            <person name="Heiman D.I."/>
            <person name="Young S.K."/>
            <person name="Furuya K."/>
            <person name="Guo Y."/>
            <person name="Pidoux A."/>
            <person name="Chen H.M."/>
            <person name="Robbertse B."/>
            <person name="Goldberg J.M."/>
            <person name="Aoki K."/>
            <person name="Bayne E.H."/>
            <person name="Berlin A.M."/>
            <person name="Desjardins C.A."/>
            <person name="Dobbs E."/>
            <person name="Dukaj L."/>
            <person name="Fan L."/>
            <person name="FitzGerald M.G."/>
            <person name="French C."/>
            <person name="Gujja S."/>
            <person name="Hansen K."/>
            <person name="Keifenheim D."/>
            <person name="Levin J.Z."/>
            <person name="Mosher R.A."/>
            <person name="Mueller C.A."/>
            <person name="Pfiffner J."/>
            <person name="Priest M."/>
            <person name="Russ C."/>
            <person name="Smialowska A."/>
            <person name="Swoboda P."/>
            <person name="Sykes S.M."/>
            <person name="Vaughn M."/>
            <person name="Vengrova S."/>
            <person name="Yoder R."/>
            <person name="Zeng Q."/>
            <person name="Allshire R."/>
            <person name="Baulcombe D."/>
            <person name="Birren B.W."/>
            <person name="Brown W."/>
            <person name="Ekwall K."/>
            <person name="Kellis M."/>
            <person name="Leatherwood J."/>
            <person name="Levin H."/>
            <person name="Margalit H."/>
            <person name="Martienssen R."/>
            <person name="Nieduszynski C.A."/>
            <person name="Spatafora J.W."/>
            <person name="Friedman N."/>
            <person name="Dalgaard J.Z."/>
            <person name="Baumann P."/>
            <person name="Niki H."/>
            <person name="Regev A."/>
            <person name="Nusbaum C."/>
        </authorList>
    </citation>
    <scope>REVISION OF GENE MODEL</scope>
</reference>
<accession>O60140</accession>
<evidence type="ECO:0000255" key="1">
    <source>
        <dbReference type="PROSITE-ProRule" id="PRU00601"/>
    </source>
</evidence>
<evidence type="ECO:0000256" key="2">
    <source>
        <dbReference type="SAM" id="MobiDB-lite"/>
    </source>
</evidence>
<evidence type="ECO:0000305" key="3"/>
<protein>
    <recommendedName>
        <fullName>Uncharacterized protein C18H10.09</fullName>
    </recommendedName>
</protein>
<keyword id="KW-0963">Cytoplasm</keyword>
<keyword id="KW-0479">Metal-binding</keyword>
<keyword id="KW-1185">Reference proteome</keyword>
<keyword id="KW-0862">Zinc</keyword>
<keyword id="KW-0863">Zinc-finger</keyword>
<proteinExistence type="predicted"/>
<dbReference type="EMBL" id="CU329671">
    <property type="protein sequence ID" value="CAA18406.2"/>
    <property type="molecule type" value="Genomic_DNA"/>
</dbReference>
<dbReference type="PIR" id="T39773">
    <property type="entry name" value="T39773"/>
</dbReference>
<dbReference type="RefSeq" id="NP_595733.2">
    <property type="nucleotide sequence ID" value="NM_001021631.2"/>
</dbReference>
<dbReference type="SMR" id="O60140"/>
<dbReference type="BioGRID" id="277357">
    <property type="interactions" value="1"/>
</dbReference>
<dbReference type="STRING" id="284812.O60140"/>
<dbReference type="iPTMnet" id="O60140"/>
<dbReference type="PaxDb" id="4896-SPBC18H10.09.1"/>
<dbReference type="EnsemblFungi" id="SPBC18H10.09.1">
    <property type="protein sequence ID" value="SPBC18H10.09.1:pep"/>
    <property type="gene ID" value="SPBC18H10.09"/>
</dbReference>
<dbReference type="KEGG" id="spo:2540839"/>
<dbReference type="PomBase" id="SPBC18H10.09"/>
<dbReference type="VEuPathDB" id="FungiDB:SPBC18H10.09"/>
<dbReference type="eggNOG" id="KOG1940">
    <property type="taxonomic scope" value="Eukaryota"/>
</dbReference>
<dbReference type="HOGENOM" id="CLU_562786_0_0_1"/>
<dbReference type="InParanoid" id="O60140"/>
<dbReference type="OMA" id="CCNRIYP"/>
<dbReference type="PRO" id="PR:O60140"/>
<dbReference type="Proteomes" id="UP000002485">
    <property type="component" value="Chromosome II"/>
</dbReference>
<dbReference type="GO" id="GO:0005737">
    <property type="term" value="C:cytoplasm"/>
    <property type="evidence" value="ECO:0007669"/>
    <property type="project" value="UniProtKB-SubCell"/>
</dbReference>
<dbReference type="GO" id="GO:0008270">
    <property type="term" value="F:zinc ion binding"/>
    <property type="evidence" value="ECO:0007669"/>
    <property type="project" value="UniProtKB-KW"/>
</dbReference>
<dbReference type="GO" id="GO:0072344">
    <property type="term" value="P:rescue of stalled ribosome"/>
    <property type="evidence" value="ECO:0000266"/>
    <property type="project" value="PomBase"/>
</dbReference>
<dbReference type="InterPro" id="IPR008913">
    <property type="entry name" value="Znf_CHY"/>
</dbReference>
<dbReference type="InterPro" id="IPR037274">
    <property type="entry name" value="Znf_CHY_sf"/>
</dbReference>
<dbReference type="Pfam" id="PF05495">
    <property type="entry name" value="zf-CHY"/>
    <property type="match status" value="1"/>
</dbReference>
<dbReference type="SUPFAM" id="SSF161219">
    <property type="entry name" value="CHY zinc finger-like"/>
    <property type="match status" value="1"/>
</dbReference>
<dbReference type="PROSITE" id="PS51266">
    <property type="entry name" value="ZF_CHY"/>
    <property type="match status" value="1"/>
</dbReference>
<gene>
    <name type="ORF">SPBC18H10.09</name>
</gene>
<organism>
    <name type="scientific">Schizosaccharomyces pombe (strain 972 / ATCC 24843)</name>
    <name type="common">Fission yeast</name>
    <dbReference type="NCBI Taxonomy" id="284812"/>
    <lineage>
        <taxon>Eukaryota</taxon>
        <taxon>Fungi</taxon>
        <taxon>Dikarya</taxon>
        <taxon>Ascomycota</taxon>
        <taxon>Taphrinomycotina</taxon>
        <taxon>Schizosaccharomycetes</taxon>
        <taxon>Schizosaccharomycetales</taxon>
        <taxon>Schizosaccharomycetaceae</taxon>
        <taxon>Schizosaccharomyces</taxon>
    </lineage>
</organism>